<dbReference type="EMBL" id="DS499601">
    <property type="protein sequence ID" value="EDP48287.1"/>
    <property type="molecule type" value="Genomic_DNA"/>
</dbReference>
<dbReference type="SMR" id="B0YCF6"/>
<dbReference type="EnsemblFungi" id="EDP48287">
    <property type="protein sequence ID" value="EDP48287"/>
    <property type="gene ID" value="AFUB_090020"/>
</dbReference>
<dbReference type="VEuPathDB" id="FungiDB:AFUB_090020"/>
<dbReference type="HOGENOM" id="CLU_002472_0_0_1"/>
<dbReference type="OrthoDB" id="88653at5052"/>
<dbReference type="PhylomeDB" id="B0YCF6"/>
<dbReference type="Proteomes" id="UP000001699">
    <property type="component" value="Unassembled WGS sequence"/>
</dbReference>
<dbReference type="GO" id="GO:0005634">
    <property type="term" value="C:nucleus"/>
    <property type="evidence" value="ECO:0007669"/>
    <property type="project" value="UniProtKB-SubCell"/>
</dbReference>
<dbReference type="GO" id="GO:0005524">
    <property type="term" value="F:ATP binding"/>
    <property type="evidence" value="ECO:0007669"/>
    <property type="project" value="UniProtKB-KW"/>
</dbReference>
<dbReference type="GO" id="GO:0140664">
    <property type="term" value="F:ATP-dependent DNA damage sensor activity"/>
    <property type="evidence" value="ECO:0007669"/>
    <property type="project" value="InterPro"/>
</dbReference>
<dbReference type="GO" id="GO:0030983">
    <property type="term" value="F:mismatched DNA binding"/>
    <property type="evidence" value="ECO:0007669"/>
    <property type="project" value="InterPro"/>
</dbReference>
<dbReference type="GO" id="GO:0006298">
    <property type="term" value="P:mismatch repair"/>
    <property type="evidence" value="ECO:0007669"/>
    <property type="project" value="InterPro"/>
</dbReference>
<dbReference type="GO" id="GO:0006312">
    <property type="term" value="P:mitotic recombination"/>
    <property type="evidence" value="ECO:0007669"/>
    <property type="project" value="TreeGrafter"/>
</dbReference>
<dbReference type="FunFam" id="3.30.420.110:FF:000008">
    <property type="entry name" value="DNA mismatch repair protein"/>
    <property type="match status" value="1"/>
</dbReference>
<dbReference type="FunFam" id="3.40.1170.10:FF:000006">
    <property type="entry name" value="DNA mismatch repair protein"/>
    <property type="match status" value="1"/>
</dbReference>
<dbReference type="FunFam" id="1.10.1420.10:FF:000004">
    <property type="entry name" value="DNA mismatch repair protein Msh3"/>
    <property type="match status" value="1"/>
</dbReference>
<dbReference type="FunFam" id="3.40.50.300:FF:001909">
    <property type="entry name" value="DNA mismatch repair protein msh3"/>
    <property type="match status" value="1"/>
</dbReference>
<dbReference type="Gene3D" id="1.10.1420.10">
    <property type="match status" value="2"/>
</dbReference>
<dbReference type="Gene3D" id="3.40.1170.10">
    <property type="entry name" value="DNA repair protein MutS, domain I"/>
    <property type="match status" value="1"/>
</dbReference>
<dbReference type="Gene3D" id="3.30.420.110">
    <property type="entry name" value="MutS, connector domain"/>
    <property type="match status" value="1"/>
</dbReference>
<dbReference type="Gene3D" id="3.40.50.300">
    <property type="entry name" value="P-loop containing nucleotide triphosphate hydrolases"/>
    <property type="match status" value="1"/>
</dbReference>
<dbReference type="InterPro" id="IPR007695">
    <property type="entry name" value="DNA_mismatch_repair_MutS-lik_N"/>
</dbReference>
<dbReference type="InterPro" id="IPR017261">
    <property type="entry name" value="DNA_mismatch_repair_MutS/MSH"/>
</dbReference>
<dbReference type="InterPro" id="IPR000432">
    <property type="entry name" value="DNA_mismatch_repair_MutS_C"/>
</dbReference>
<dbReference type="InterPro" id="IPR007696">
    <property type="entry name" value="DNA_mismatch_repair_MutS_core"/>
</dbReference>
<dbReference type="InterPro" id="IPR016151">
    <property type="entry name" value="DNA_mismatch_repair_MutS_N"/>
</dbReference>
<dbReference type="InterPro" id="IPR036187">
    <property type="entry name" value="DNA_mismatch_repair_MutS_sf"/>
</dbReference>
<dbReference type="InterPro" id="IPR007860">
    <property type="entry name" value="DNA_mmatch_repair_MutS_con_dom"/>
</dbReference>
<dbReference type="InterPro" id="IPR045076">
    <property type="entry name" value="MutS"/>
</dbReference>
<dbReference type="InterPro" id="IPR036678">
    <property type="entry name" value="MutS_con_dom_sf"/>
</dbReference>
<dbReference type="InterPro" id="IPR027417">
    <property type="entry name" value="P-loop_NTPase"/>
</dbReference>
<dbReference type="NCBIfam" id="NF003810">
    <property type="entry name" value="PRK05399.1"/>
    <property type="match status" value="1"/>
</dbReference>
<dbReference type="PANTHER" id="PTHR11361:SF122">
    <property type="entry name" value="DNA MISMATCH REPAIR PROTEIN MSH3"/>
    <property type="match status" value="1"/>
</dbReference>
<dbReference type="PANTHER" id="PTHR11361">
    <property type="entry name" value="DNA MISMATCH REPAIR PROTEIN MUTS FAMILY MEMBER"/>
    <property type="match status" value="1"/>
</dbReference>
<dbReference type="Pfam" id="PF01624">
    <property type="entry name" value="MutS_I"/>
    <property type="match status" value="1"/>
</dbReference>
<dbReference type="Pfam" id="PF05188">
    <property type="entry name" value="MutS_II"/>
    <property type="match status" value="1"/>
</dbReference>
<dbReference type="Pfam" id="PF05192">
    <property type="entry name" value="MutS_III"/>
    <property type="match status" value="1"/>
</dbReference>
<dbReference type="Pfam" id="PF00488">
    <property type="entry name" value="MutS_V"/>
    <property type="match status" value="1"/>
</dbReference>
<dbReference type="PIRSF" id="PIRSF037677">
    <property type="entry name" value="DNA_mis_repair_Msh6"/>
    <property type="match status" value="1"/>
</dbReference>
<dbReference type="SMART" id="SM00534">
    <property type="entry name" value="MUTSac"/>
    <property type="match status" value="1"/>
</dbReference>
<dbReference type="SMART" id="SM00533">
    <property type="entry name" value="MUTSd"/>
    <property type="match status" value="1"/>
</dbReference>
<dbReference type="SUPFAM" id="SSF55271">
    <property type="entry name" value="DNA repair protein MutS, domain I"/>
    <property type="match status" value="1"/>
</dbReference>
<dbReference type="SUPFAM" id="SSF48334">
    <property type="entry name" value="DNA repair protein MutS, domain III"/>
    <property type="match status" value="1"/>
</dbReference>
<dbReference type="SUPFAM" id="SSF52540">
    <property type="entry name" value="P-loop containing nucleoside triphosphate hydrolases"/>
    <property type="match status" value="1"/>
</dbReference>
<dbReference type="PROSITE" id="PS00486">
    <property type="entry name" value="DNA_MISMATCH_REPAIR_2"/>
    <property type="match status" value="1"/>
</dbReference>
<gene>
    <name type="primary">msh3</name>
    <name type="ORF">AFUB_090020</name>
</gene>
<proteinExistence type="inferred from homology"/>
<name>MSH3_ASPFC</name>
<protein>
    <recommendedName>
        <fullName>DNA mismatch repair protein msh3</fullName>
    </recommendedName>
    <alternativeName>
        <fullName>MutS protein homolog 3</fullName>
    </alternativeName>
</protein>
<comment type="function">
    <text evidence="1">Component of the post-replicative DNA mismatch repair system (MMR). Heterodimerizes with msh2 to form MutS beta, which binds to DNA mismatches thereby initiating DNA repair. Msh3 provides substrate-binding and substrate specificity to the complex. When bound, the MutS beta heterodimer bends the DNA helix and shields approximately 20 base pairs. Acts mainly to repair insertion-deletion loops (IDLs) from 2 to 13 nucleotides in size, but can also repair base-base and single insertion-deletion mismatches that occur during replication. After mismatch binding, forms a ternary complex with the MutL alpha heterodimer, which is thought to be responsible for directing the downstream MMR events, including strand discrimination, excision, and resynthesis. ATP binding and hydrolysis play a pivotal role in mismatch repair functions (By similarity).</text>
</comment>
<comment type="subunit">
    <text evidence="1">Heterodimer consisting of msh2-msh3 (MutS beta). Forms a ternary complex with MutL alpha (mlh1-pms1) (By similarity).</text>
</comment>
<comment type="subcellular location">
    <subcellularLocation>
        <location evidence="1">Nucleus</location>
    </subcellularLocation>
</comment>
<comment type="similarity">
    <text evidence="4">Belongs to the DNA mismatch repair MutS family. MSH3 subfamily.</text>
</comment>
<sequence length="1123" mass="124367">MTLSSSQSSPPSTQNLKRKQQTISSFFTKRAPSAEKRSNDIEDGRATTQKGAEMPLRETAGDQNNLEDDEDGDVVVRAPKRVKTNGVDPENGFGRNIKEASNIARRPDPPLSSSQRTNLYKFASSQADDAGIEKTDDPEARQRQLEREKLHKLFVKKLGGADCLIGIGRDATTEAPSGTEDVAEGDEDDESPPQPRSKGKGLSKKGGSKLTPLEKQVIEIKRKHMDTILVVEVGYKFRFFGEDARIAAKELSIVCIPGKMRFDEHPSEAHLDRFASASIPVHRLHVHVKRLVSAGYKVGVVRQLETAALKAAGDNRNAPFSRKLTNLYTKGTYVDDVEGLDGATPAASGGASPATGYMLCITETNAKGWGNDEKVHVGIVAVQPNTGDVIYDDFDDGFMRSEVETRLLHIAPCELVIVGELSKATEKLVQHLSGSKLNTFGDKVRVDRVAKKKTAVAESHSHVANFYAAKLKAANTADDAPASNLLQKVLNLPEQVTVCLSAMIQHLTEYGLEHIFELTKYFQHFSSRSHMLLNANTLVSLEIYQNQTDHSAKGSLFWTLDRTQTRFGQRLLRKWVGRPLLDKERLEERVNAVEELKSPERTVQAERLKIMLGKIKSDLEKNLIRIYYGKCTRPELLTVLQTLQTIAQEYVDVKTPQDSGFTSPILGEAIARVPSILGDVVKFLNKINMHAARNDDKYEFFRESEETEGISEHKCGIASVEHELEEHRSVAAGILKWPKVTYVTSSGIEYLIEVENSAAAIKRVPASWVKVSGTKKVSRFHTPEVIQLLRQRDQHKEALAAACDQAFAALLAEIASNYQSFRDCVQSLATLDCLLSLAAIASQPGYVKPEYTDQTCIHVEQGRHPMVEQLLLDSYVPNDIDLDSDKTRALLVTGPNMGGKSSYVRQIALIAIMAQIGSYVPARSAKLGMLDAVFTRMGAFDNMLAGESTFMVELSETADILKQATPRSLVILDELGRGTSTHDGVAIAQAVLDYMVRTIRSLTLFITHYQHLSNMAQSFPDHELRNVHMRFTESGSGKDEEITFLYEVGEGVAHRSYGLNVARLANLPAPLLEVARQKSSELEERIRRRRLARLLADVGGLIEDPAKGDENFFQRLISNAEQL</sequence>
<organism>
    <name type="scientific">Aspergillus fumigatus (strain CBS 144.89 / FGSC A1163 / CEA10)</name>
    <name type="common">Neosartorya fumigata</name>
    <dbReference type="NCBI Taxonomy" id="451804"/>
    <lineage>
        <taxon>Eukaryota</taxon>
        <taxon>Fungi</taxon>
        <taxon>Dikarya</taxon>
        <taxon>Ascomycota</taxon>
        <taxon>Pezizomycotina</taxon>
        <taxon>Eurotiomycetes</taxon>
        <taxon>Eurotiomycetidae</taxon>
        <taxon>Eurotiales</taxon>
        <taxon>Aspergillaceae</taxon>
        <taxon>Aspergillus</taxon>
        <taxon>Aspergillus subgen. Fumigati</taxon>
    </lineage>
</organism>
<reference key="1">
    <citation type="journal article" date="2008" name="PLoS Genet.">
        <title>Genomic islands in the pathogenic filamentous fungus Aspergillus fumigatus.</title>
        <authorList>
            <person name="Fedorova N.D."/>
            <person name="Khaldi N."/>
            <person name="Joardar V.S."/>
            <person name="Maiti R."/>
            <person name="Amedeo P."/>
            <person name="Anderson M.J."/>
            <person name="Crabtree J."/>
            <person name="Silva J.C."/>
            <person name="Badger J.H."/>
            <person name="Albarraq A."/>
            <person name="Angiuoli S."/>
            <person name="Bussey H."/>
            <person name="Bowyer P."/>
            <person name="Cotty P.J."/>
            <person name="Dyer P.S."/>
            <person name="Egan A."/>
            <person name="Galens K."/>
            <person name="Fraser-Liggett C.M."/>
            <person name="Haas B.J."/>
            <person name="Inman J.M."/>
            <person name="Kent R."/>
            <person name="Lemieux S."/>
            <person name="Malavazi I."/>
            <person name="Orvis J."/>
            <person name="Roemer T."/>
            <person name="Ronning C.M."/>
            <person name="Sundaram J.P."/>
            <person name="Sutton G."/>
            <person name="Turner G."/>
            <person name="Venter J.C."/>
            <person name="White O.R."/>
            <person name="Whitty B.R."/>
            <person name="Youngman P."/>
            <person name="Wolfe K.H."/>
            <person name="Goldman G.H."/>
            <person name="Wortman J.R."/>
            <person name="Jiang B."/>
            <person name="Denning D.W."/>
            <person name="Nierman W.C."/>
        </authorList>
    </citation>
    <scope>NUCLEOTIDE SEQUENCE [LARGE SCALE GENOMIC DNA]</scope>
    <source>
        <strain>CBS 144.89 / FGSC A1163 / CEA10</strain>
    </source>
</reference>
<feature type="chain" id="PRO_0000338510" description="DNA mismatch repair protein msh3">
    <location>
        <begin position="1"/>
        <end position="1123"/>
    </location>
</feature>
<feature type="region of interest" description="Disordered" evidence="3">
    <location>
        <begin position="1"/>
        <end position="117"/>
    </location>
</feature>
<feature type="region of interest" description="Disordered" evidence="3">
    <location>
        <begin position="169"/>
        <end position="208"/>
    </location>
</feature>
<feature type="region of interest" description="Mispair-binding domain" evidence="1">
    <location>
        <begin position="204"/>
        <end position="331"/>
    </location>
</feature>
<feature type="compositionally biased region" description="Low complexity" evidence="3">
    <location>
        <begin position="1"/>
        <end position="12"/>
    </location>
</feature>
<feature type="compositionally biased region" description="Basic and acidic residues" evidence="3">
    <location>
        <begin position="32"/>
        <end position="45"/>
    </location>
</feature>
<feature type="compositionally biased region" description="Acidic residues" evidence="3">
    <location>
        <begin position="181"/>
        <end position="191"/>
    </location>
</feature>
<feature type="compositionally biased region" description="Basic residues" evidence="3">
    <location>
        <begin position="197"/>
        <end position="207"/>
    </location>
</feature>
<feature type="binding site" evidence="2">
    <location>
        <begin position="894"/>
        <end position="901"/>
    </location>
    <ligand>
        <name>ATP</name>
        <dbReference type="ChEBI" id="CHEBI:30616"/>
    </ligand>
</feature>
<evidence type="ECO:0000250" key="1"/>
<evidence type="ECO:0000255" key="2"/>
<evidence type="ECO:0000256" key="3">
    <source>
        <dbReference type="SAM" id="MobiDB-lite"/>
    </source>
</evidence>
<evidence type="ECO:0000305" key="4"/>
<keyword id="KW-0067">ATP-binding</keyword>
<keyword id="KW-0227">DNA damage</keyword>
<keyword id="KW-0234">DNA repair</keyword>
<keyword id="KW-0238">DNA-binding</keyword>
<keyword id="KW-0547">Nucleotide-binding</keyword>
<keyword id="KW-0539">Nucleus</keyword>
<accession>B0YCF6</accession>